<accession>P07216</accession>
<comment type="function">
    <text evidence="1">Metallothioneins have a high content of cysteine residues that bind various heavy metals.</text>
</comment>
<comment type="domain">
    <text>Class I metallothioneins contain 2 metal-binding domains: four divalent ions are chelated within cluster A of the alpha domain and are coordinated via cysteinyl thiolate bridges to 11 cysteine ligands. Cluster B, the corresponding region within the beta domain, can ligate three divalent ions to 9 cysteines.</text>
</comment>
<comment type="similarity">
    <text evidence="5">Belongs to the metallothionein superfamily. Type 1 family.</text>
</comment>
<gene>
    <name type="primary">mt</name>
</gene>
<dbReference type="EMBL" id="X56743">
    <property type="protein sequence ID" value="CAA40067.1"/>
    <property type="molecule type" value="mRNA"/>
</dbReference>
<dbReference type="PIR" id="A05076">
    <property type="entry name" value="A05076"/>
</dbReference>
<dbReference type="PIR" id="S30567">
    <property type="entry name" value="S30567"/>
</dbReference>
<dbReference type="SMR" id="P07216"/>
<dbReference type="GO" id="GO:0046872">
    <property type="term" value="F:metal ion binding"/>
    <property type="evidence" value="ECO:0007669"/>
    <property type="project" value="UniProtKB-KW"/>
</dbReference>
<dbReference type="FunFam" id="4.10.10.10:FF:000001">
    <property type="entry name" value="Metallothionein"/>
    <property type="match status" value="1"/>
</dbReference>
<dbReference type="Gene3D" id="4.10.10.10">
    <property type="entry name" value="Metallothionein Isoform II"/>
    <property type="match status" value="1"/>
</dbReference>
<dbReference type="InterPro" id="IPR017854">
    <property type="entry name" value="Metalthion_dom_sf"/>
</dbReference>
<dbReference type="InterPro" id="IPR023587">
    <property type="entry name" value="Metalthion_dom_sf_vert"/>
</dbReference>
<dbReference type="InterPro" id="IPR000006">
    <property type="entry name" value="Metalthion_vert"/>
</dbReference>
<dbReference type="InterPro" id="IPR018064">
    <property type="entry name" value="Metalthion_vert_metal_BS"/>
</dbReference>
<dbReference type="PANTHER" id="PTHR23299">
    <property type="entry name" value="METALLOTHIONEIN"/>
    <property type="match status" value="1"/>
</dbReference>
<dbReference type="PANTHER" id="PTHR23299:SF24">
    <property type="entry name" value="METALLOTHIONEIN-1X"/>
    <property type="match status" value="1"/>
</dbReference>
<dbReference type="Pfam" id="PF00131">
    <property type="entry name" value="Metallothio"/>
    <property type="match status" value="1"/>
</dbReference>
<dbReference type="PRINTS" id="PR00860">
    <property type="entry name" value="MTVERTEBRATE"/>
</dbReference>
<dbReference type="SUPFAM" id="SSF57868">
    <property type="entry name" value="Metallothionein"/>
    <property type="match status" value="1"/>
</dbReference>
<dbReference type="PROSITE" id="PS00203">
    <property type="entry name" value="METALLOTHIONEIN_VRT"/>
    <property type="match status" value="1"/>
</dbReference>
<proteinExistence type="evidence at protein level"/>
<sequence length="60" mass="6029">MDPCECSKTGTCNCGGSCTCKNCSCTTCNKSCCPCCPSGCPKCASGCVCKGKTCDTSCCQ</sequence>
<protein>
    <recommendedName>
        <fullName>Metallothionein</fullName>
        <shortName>MT</shortName>
    </recommendedName>
</protein>
<feature type="chain" id="PRO_0000197309" description="Metallothionein">
    <location>
        <begin position="1"/>
        <end position="60"/>
    </location>
</feature>
<feature type="region of interest" description="Beta">
    <location>
        <begin position="1"/>
        <end position="28"/>
    </location>
</feature>
<feature type="region of interest" description="Alpha">
    <location>
        <begin position="29"/>
        <end position="60"/>
    </location>
</feature>
<feature type="binding site" evidence="2">
    <location>
        <position position="4"/>
    </location>
    <ligand>
        <name>a divalent metal cation</name>
        <dbReference type="ChEBI" id="CHEBI:60240"/>
        <label>1</label>
        <note>in cluster B</note>
    </ligand>
</feature>
<feature type="binding site" evidence="2">
    <location>
        <position position="6"/>
    </location>
    <ligand>
        <name>a divalent metal cation</name>
        <dbReference type="ChEBI" id="CHEBI:60240"/>
        <label>1</label>
        <note>in cluster B</note>
    </ligand>
</feature>
<feature type="binding site" evidence="2">
    <location>
        <position position="6"/>
    </location>
    <ligand>
        <name>a divalent metal cation</name>
        <dbReference type="ChEBI" id="CHEBI:60240"/>
        <label>2</label>
        <note>in cluster B</note>
    </ligand>
</feature>
<feature type="binding site" evidence="2">
    <location>
        <position position="12"/>
    </location>
    <ligand>
        <name>a divalent metal cation</name>
        <dbReference type="ChEBI" id="CHEBI:60240"/>
        <label>2</label>
        <note>in cluster B</note>
    </ligand>
</feature>
<feature type="binding site" evidence="2">
    <location>
        <position position="14"/>
    </location>
    <ligand>
        <name>a divalent metal cation</name>
        <dbReference type="ChEBI" id="CHEBI:60240"/>
        <label>2</label>
        <note>in cluster B</note>
    </ligand>
</feature>
<feature type="binding site" evidence="2">
    <location>
        <position position="14"/>
    </location>
    <ligand>
        <name>a divalent metal cation</name>
        <dbReference type="ChEBI" id="CHEBI:60240"/>
        <label>3</label>
        <note>in cluster B</note>
    </ligand>
</feature>
<feature type="binding site" evidence="2">
    <location>
        <position position="18"/>
    </location>
    <ligand>
        <name>a divalent metal cation</name>
        <dbReference type="ChEBI" id="CHEBI:60240"/>
        <label>3</label>
        <note>in cluster B</note>
    </ligand>
</feature>
<feature type="binding site" evidence="2">
    <location>
        <position position="20"/>
    </location>
    <ligand>
        <name>a divalent metal cation</name>
        <dbReference type="ChEBI" id="CHEBI:60240"/>
        <label>1</label>
        <note>in cluster B</note>
    </ligand>
</feature>
<feature type="binding site" evidence="2">
    <location>
        <position position="23"/>
    </location>
    <ligand>
        <name>a divalent metal cation</name>
        <dbReference type="ChEBI" id="CHEBI:60240"/>
        <label>1</label>
        <note>in cluster B</note>
    </ligand>
</feature>
<feature type="binding site" evidence="2">
    <location>
        <position position="23"/>
    </location>
    <ligand>
        <name>a divalent metal cation</name>
        <dbReference type="ChEBI" id="CHEBI:60240"/>
        <label>3</label>
        <note>in cluster B</note>
    </ligand>
</feature>
<feature type="binding site" evidence="2">
    <location>
        <position position="25"/>
    </location>
    <ligand>
        <name>a divalent metal cation</name>
        <dbReference type="ChEBI" id="CHEBI:60240"/>
        <label>2</label>
        <note>in cluster B</note>
    </ligand>
</feature>
<feature type="binding site" evidence="2">
    <location>
        <position position="28"/>
    </location>
    <ligand>
        <name>a divalent metal cation</name>
        <dbReference type="ChEBI" id="CHEBI:60240"/>
        <label>3</label>
        <note>in cluster B</note>
    </ligand>
</feature>
<feature type="binding site" evidence="2">
    <location>
        <position position="32"/>
    </location>
    <ligand>
        <name>a divalent metal cation</name>
        <dbReference type="ChEBI" id="CHEBI:60240"/>
        <label>4</label>
        <note>in cluster A</note>
    </ligand>
</feature>
<feature type="binding site" evidence="2">
    <location>
        <position position="33"/>
    </location>
    <ligand>
        <name>a divalent metal cation</name>
        <dbReference type="ChEBI" id="CHEBI:60240"/>
        <label>4</label>
        <note>in cluster A</note>
    </ligand>
</feature>
<feature type="binding site" evidence="2">
    <location>
        <position position="33"/>
    </location>
    <ligand>
        <name>a divalent metal cation</name>
        <dbReference type="ChEBI" id="CHEBI:60240"/>
        <label>5</label>
        <note>in cluster A</note>
    </ligand>
</feature>
<feature type="binding site" evidence="2">
    <location>
        <position position="35"/>
    </location>
    <ligand>
        <name>a divalent metal cation</name>
        <dbReference type="ChEBI" id="CHEBI:60240"/>
        <label>5</label>
        <note>in cluster A</note>
    </ligand>
</feature>
<feature type="binding site" evidence="2">
    <location>
        <position position="36"/>
    </location>
    <ligand>
        <name>a divalent metal cation</name>
        <dbReference type="ChEBI" id="CHEBI:60240"/>
        <label>5</label>
        <note>in cluster A</note>
    </ligand>
</feature>
<feature type="binding site" evidence="2">
    <location>
        <position position="36"/>
    </location>
    <ligand>
        <name>a divalent metal cation</name>
        <dbReference type="ChEBI" id="CHEBI:60240"/>
        <label>6</label>
        <note>in cluster A</note>
    </ligand>
</feature>
<feature type="binding site" evidence="2">
    <location>
        <position position="40"/>
    </location>
    <ligand>
        <name>a divalent metal cation</name>
        <dbReference type="ChEBI" id="CHEBI:60240"/>
        <label>6</label>
        <note>in cluster A</note>
    </ligand>
</feature>
<feature type="binding site" evidence="2">
    <location>
        <position position="43"/>
    </location>
    <ligand>
        <name>a divalent metal cation</name>
        <dbReference type="ChEBI" id="CHEBI:60240"/>
        <label>4</label>
        <note>in cluster A</note>
    </ligand>
</feature>
<feature type="binding site" evidence="2">
    <location>
        <position position="43"/>
    </location>
    <ligand>
        <name>a divalent metal cation</name>
        <dbReference type="ChEBI" id="CHEBI:60240"/>
        <label>6</label>
        <note>in cluster A</note>
    </ligand>
</feature>
<feature type="binding site" evidence="2">
    <location>
        <position position="47"/>
    </location>
    <ligand>
        <name>a divalent metal cation</name>
        <dbReference type="ChEBI" id="CHEBI:60240"/>
        <label>4</label>
        <note>in cluster A</note>
    </ligand>
</feature>
<feature type="binding site" evidence="2">
    <location>
        <position position="49"/>
    </location>
    <ligand>
        <name>a divalent metal cation</name>
        <dbReference type="ChEBI" id="CHEBI:60240"/>
        <label>5</label>
        <note>in cluster A</note>
    </ligand>
</feature>
<feature type="binding site" evidence="2">
    <location>
        <position position="49"/>
    </location>
    <ligand>
        <name>a divalent metal cation</name>
        <dbReference type="ChEBI" id="CHEBI:60240"/>
        <label>7</label>
        <note>in cluster A</note>
    </ligand>
</feature>
<feature type="binding site" evidence="3">
    <location>
        <position position="54"/>
    </location>
    <ligand>
        <name>a divalent metal cation</name>
        <dbReference type="ChEBI" id="CHEBI:60240"/>
        <label>7</label>
        <note>in cluster A</note>
    </ligand>
</feature>
<feature type="binding site" evidence="2">
    <location>
        <position position="58"/>
    </location>
    <ligand>
        <name>a divalent metal cation</name>
        <dbReference type="ChEBI" id="CHEBI:60240"/>
        <label>7</label>
        <note>in cluster A</note>
    </ligand>
</feature>
<feature type="binding site" evidence="2">
    <location>
        <position position="59"/>
    </location>
    <ligand>
        <name>a divalent metal cation</name>
        <dbReference type="ChEBI" id="CHEBI:60240"/>
        <label>6</label>
        <note>in cluster A</note>
    </ligand>
</feature>
<feature type="binding site" evidence="2">
    <location>
        <position position="59"/>
    </location>
    <ligand>
        <name>a divalent metal cation</name>
        <dbReference type="ChEBI" id="CHEBI:60240"/>
        <label>7</label>
        <note>in cluster A</note>
    </ligand>
</feature>
<feature type="modified residue" description="N-acetylmethionine" evidence="4">
    <location>
        <position position="1"/>
    </location>
</feature>
<name>MT_PLEPL</name>
<reference key="1">
    <citation type="submission" date="1990-11" db="EMBL/GenBank/DDBJ databases">
        <authorList>
            <person name="Leaver M.J."/>
            <person name="George S.G."/>
        </authorList>
    </citation>
    <scope>NUCLEOTIDE SEQUENCE [MRNA]</scope>
    <source>
        <tissue>Liver</tissue>
    </source>
</reference>
<reference key="2">
    <citation type="journal article" date="1981" name="Biochem. Soc. Trans.">
        <title>Partial amino acid sequence of metallothionein from the plaice (Pleuronectes platessa).</title>
        <authorList>
            <person name="Overnell J."/>
            <person name="Berger C."/>
            <person name="Wilson K.J."/>
        </authorList>
    </citation>
    <scope>PRELIMINARY PARTIAL PROTEIN SEQUENCE</scope>
    <scope>ACETYLATION AT MET-1</scope>
</reference>
<organism>
    <name type="scientific">Pleuronectes platessa</name>
    <name type="common">European plaice</name>
    <dbReference type="NCBI Taxonomy" id="8262"/>
    <lineage>
        <taxon>Eukaryota</taxon>
        <taxon>Metazoa</taxon>
        <taxon>Chordata</taxon>
        <taxon>Craniata</taxon>
        <taxon>Vertebrata</taxon>
        <taxon>Euteleostomi</taxon>
        <taxon>Actinopterygii</taxon>
        <taxon>Neopterygii</taxon>
        <taxon>Teleostei</taxon>
        <taxon>Neoteleostei</taxon>
        <taxon>Acanthomorphata</taxon>
        <taxon>Carangaria</taxon>
        <taxon>Pleuronectiformes</taxon>
        <taxon>Pleuronectoidei</taxon>
        <taxon>Pleuronectidae</taxon>
        <taxon>Pleuronectes</taxon>
    </lineage>
</organism>
<keyword id="KW-0007">Acetylation</keyword>
<keyword id="KW-0186">Copper</keyword>
<keyword id="KW-0903">Direct protein sequencing</keyword>
<keyword id="KW-0479">Metal-binding</keyword>
<keyword id="KW-0480">Metal-thiolate cluster</keyword>
<evidence type="ECO:0000250" key="1"/>
<evidence type="ECO:0000250" key="2">
    <source>
        <dbReference type="UniProtKB" id="P02795"/>
    </source>
</evidence>
<evidence type="ECO:0000250" key="3">
    <source>
        <dbReference type="UniProtKB" id="P62339"/>
    </source>
</evidence>
<evidence type="ECO:0000269" key="4">
    <source ref="2"/>
</evidence>
<evidence type="ECO:0000305" key="5"/>